<proteinExistence type="inferred from homology"/>
<feature type="chain" id="PRO_1000092112" description="4-diphosphocytidyl-2-C-methyl-D-erythritol kinase">
    <location>
        <begin position="1"/>
        <end position="283"/>
    </location>
</feature>
<feature type="active site" evidence="1">
    <location>
        <position position="10"/>
    </location>
</feature>
<feature type="active site" evidence="1">
    <location>
        <position position="141"/>
    </location>
</feature>
<feature type="binding site" evidence="1">
    <location>
        <begin position="99"/>
        <end position="109"/>
    </location>
    <ligand>
        <name>ATP</name>
        <dbReference type="ChEBI" id="CHEBI:30616"/>
    </ligand>
</feature>
<protein>
    <recommendedName>
        <fullName evidence="1">4-diphosphocytidyl-2-C-methyl-D-erythritol kinase</fullName>
        <shortName evidence="1">CMK</shortName>
        <ecNumber evidence="1">2.7.1.148</ecNumber>
    </recommendedName>
    <alternativeName>
        <fullName evidence="1">4-(cytidine-5'-diphospho)-2-C-methyl-D-erythritol kinase</fullName>
    </alternativeName>
</protein>
<evidence type="ECO:0000255" key="1">
    <source>
        <dbReference type="HAMAP-Rule" id="MF_00061"/>
    </source>
</evidence>
<accession>B5R921</accession>
<sequence>MMTHWPSPAKLNLFLYITGQRADGYHTLQTLFQFLDYGDTLHIEPRRDGEIHLLTPVTGVENEDNLIVRAARLLMKVASESGRLPAGSGADISIEKRLPMGGGLGGGSSNAATVLVALNHLWQCGLSIDELTTLGLTLGADVPVFVRGHAAFAEGVGEILTPVNPPEKWYLVAHPGVSIPTPVIFKDPQLPRNTPKRSIDTLLKCEFSNDCEVIARKRFREVDAALSWLLEYAPSRLTGTGACVFAEFDTESCARQVLEQAPEWLNAFVAKGVNLSPLHRELL</sequence>
<gene>
    <name evidence="1" type="primary">ispE</name>
    <name type="ordered locus">SG1338</name>
</gene>
<organism>
    <name type="scientific">Salmonella gallinarum (strain 287/91 / NCTC 13346)</name>
    <dbReference type="NCBI Taxonomy" id="550538"/>
    <lineage>
        <taxon>Bacteria</taxon>
        <taxon>Pseudomonadati</taxon>
        <taxon>Pseudomonadota</taxon>
        <taxon>Gammaproteobacteria</taxon>
        <taxon>Enterobacterales</taxon>
        <taxon>Enterobacteriaceae</taxon>
        <taxon>Salmonella</taxon>
    </lineage>
</organism>
<keyword id="KW-0067">ATP-binding</keyword>
<keyword id="KW-0414">Isoprene biosynthesis</keyword>
<keyword id="KW-0418">Kinase</keyword>
<keyword id="KW-0547">Nucleotide-binding</keyword>
<keyword id="KW-0808">Transferase</keyword>
<dbReference type="EC" id="2.7.1.148" evidence="1"/>
<dbReference type="EMBL" id="AM933173">
    <property type="protein sequence ID" value="CAR37214.1"/>
    <property type="molecule type" value="Genomic_DNA"/>
</dbReference>
<dbReference type="RefSeq" id="WP_000988261.1">
    <property type="nucleotide sequence ID" value="NC_011274.1"/>
</dbReference>
<dbReference type="SMR" id="B5R921"/>
<dbReference type="KEGG" id="seg:SG1338"/>
<dbReference type="HOGENOM" id="CLU_053057_3_0_6"/>
<dbReference type="UniPathway" id="UPA00056">
    <property type="reaction ID" value="UER00094"/>
</dbReference>
<dbReference type="Proteomes" id="UP000008321">
    <property type="component" value="Chromosome"/>
</dbReference>
<dbReference type="GO" id="GO:0050515">
    <property type="term" value="F:4-(cytidine 5'-diphospho)-2-C-methyl-D-erythritol kinase activity"/>
    <property type="evidence" value="ECO:0007669"/>
    <property type="project" value="UniProtKB-UniRule"/>
</dbReference>
<dbReference type="GO" id="GO:0005524">
    <property type="term" value="F:ATP binding"/>
    <property type="evidence" value="ECO:0007669"/>
    <property type="project" value="UniProtKB-UniRule"/>
</dbReference>
<dbReference type="GO" id="GO:0019288">
    <property type="term" value="P:isopentenyl diphosphate biosynthetic process, methylerythritol 4-phosphate pathway"/>
    <property type="evidence" value="ECO:0007669"/>
    <property type="project" value="UniProtKB-UniRule"/>
</dbReference>
<dbReference type="GO" id="GO:0016114">
    <property type="term" value="P:terpenoid biosynthetic process"/>
    <property type="evidence" value="ECO:0007669"/>
    <property type="project" value="InterPro"/>
</dbReference>
<dbReference type="FunFam" id="3.30.230.10:FF:000022">
    <property type="entry name" value="4-diphosphocytidyl-2-C-methyl-D-erythritol kinase"/>
    <property type="match status" value="1"/>
</dbReference>
<dbReference type="FunFam" id="3.30.70.890:FF:000004">
    <property type="entry name" value="4-diphosphocytidyl-2-C-methyl-D-erythritol kinase"/>
    <property type="match status" value="1"/>
</dbReference>
<dbReference type="Gene3D" id="3.30.230.10">
    <property type="match status" value="1"/>
</dbReference>
<dbReference type="Gene3D" id="3.30.70.890">
    <property type="entry name" value="GHMP kinase, C-terminal domain"/>
    <property type="match status" value="1"/>
</dbReference>
<dbReference type="HAMAP" id="MF_00061">
    <property type="entry name" value="IspE"/>
    <property type="match status" value="1"/>
</dbReference>
<dbReference type="InterPro" id="IPR013750">
    <property type="entry name" value="GHMP_kinase_C_dom"/>
</dbReference>
<dbReference type="InterPro" id="IPR036554">
    <property type="entry name" value="GHMP_kinase_C_sf"/>
</dbReference>
<dbReference type="InterPro" id="IPR006204">
    <property type="entry name" value="GHMP_kinase_N_dom"/>
</dbReference>
<dbReference type="InterPro" id="IPR004424">
    <property type="entry name" value="IspE"/>
</dbReference>
<dbReference type="InterPro" id="IPR020568">
    <property type="entry name" value="Ribosomal_Su5_D2-typ_SF"/>
</dbReference>
<dbReference type="InterPro" id="IPR014721">
    <property type="entry name" value="Ribsml_uS5_D2-typ_fold_subgr"/>
</dbReference>
<dbReference type="NCBIfam" id="TIGR00154">
    <property type="entry name" value="ispE"/>
    <property type="match status" value="1"/>
</dbReference>
<dbReference type="PANTHER" id="PTHR43527">
    <property type="entry name" value="4-DIPHOSPHOCYTIDYL-2-C-METHYL-D-ERYTHRITOL KINASE, CHLOROPLASTIC"/>
    <property type="match status" value="1"/>
</dbReference>
<dbReference type="PANTHER" id="PTHR43527:SF2">
    <property type="entry name" value="4-DIPHOSPHOCYTIDYL-2-C-METHYL-D-ERYTHRITOL KINASE, CHLOROPLASTIC"/>
    <property type="match status" value="1"/>
</dbReference>
<dbReference type="Pfam" id="PF08544">
    <property type="entry name" value="GHMP_kinases_C"/>
    <property type="match status" value="1"/>
</dbReference>
<dbReference type="Pfam" id="PF00288">
    <property type="entry name" value="GHMP_kinases_N"/>
    <property type="match status" value="1"/>
</dbReference>
<dbReference type="PIRSF" id="PIRSF010376">
    <property type="entry name" value="IspE"/>
    <property type="match status" value="1"/>
</dbReference>
<dbReference type="SUPFAM" id="SSF55060">
    <property type="entry name" value="GHMP Kinase, C-terminal domain"/>
    <property type="match status" value="1"/>
</dbReference>
<dbReference type="SUPFAM" id="SSF54211">
    <property type="entry name" value="Ribosomal protein S5 domain 2-like"/>
    <property type="match status" value="1"/>
</dbReference>
<reference key="1">
    <citation type="journal article" date="2008" name="Genome Res.">
        <title>Comparative genome analysis of Salmonella enteritidis PT4 and Salmonella gallinarum 287/91 provides insights into evolutionary and host adaptation pathways.</title>
        <authorList>
            <person name="Thomson N.R."/>
            <person name="Clayton D.J."/>
            <person name="Windhorst D."/>
            <person name="Vernikos G."/>
            <person name="Davidson S."/>
            <person name="Churcher C."/>
            <person name="Quail M.A."/>
            <person name="Stevens M."/>
            <person name="Jones M.A."/>
            <person name="Watson M."/>
            <person name="Barron A."/>
            <person name="Layton A."/>
            <person name="Pickard D."/>
            <person name="Kingsley R.A."/>
            <person name="Bignell A."/>
            <person name="Clark L."/>
            <person name="Harris B."/>
            <person name="Ormond D."/>
            <person name="Abdellah Z."/>
            <person name="Brooks K."/>
            <person name="Cherevach I."/>
            <person name="Chillingworth T."/>
            <person name="Woodward J."/>
            <person name="Norberczak H."/>
            <person name="Lord A."/>
            <person name="Arrowsmith C."/>
            <person name="Jagels K."/>
            <person name="Moule S."/>
            <person name="Mungall K."/>
            <person name="Saunders M."/>
            <person name="Whitehead S."/>
            <person name="Chabalgoity J.A."/>
            <person name="Maskell D."/>
            <person name="Humphreys T."/>
            <person name="Roberts M."/>
            <person name="Barrow P.A."/>
            <person name="Dougan G."/>
            <person name="Parkhill J."/>
        </authorList>
    </citation>
    <scope>NUCLEOTIDE SEQUENCE [LARGE SCALE GENOMIC DNA]</scope>
    <source>
        <strain>287/91 / NCTC 13346</strain>
    </source>
</reference>
<name>ISPE_SALG2</name>
<comment type="function">
    <text evidence="1">Catalyzes the phosphorylation of the position 2 hydroxy group of 4-diphosphocytidyl-2C-methyl-D-erythritol.</text>
</comment>
<comment type="catalytic activity">
    <reaction evidence="1">
        <text>4-CDP-2-C-methyl-D-erythritol + ATP = 4-CDP-2-C-methyl-D-erythritol 2-phosphate + ADP + H(+)</text>
        <dbReference type="Rhea" id="RHEA:18437"/>
        <dbReference type="ChEBI" id="CHEBI:15378"/>
        <dbReference type="ChEBI" id="CHEBI:30616"/>
        <dbReference type="ChEBI" id="CHEBI:57823"/>
        <dbReference type="ChEBI" id="CHEBI:57919"/>
        <dbReference type="ChEBI" id="CHEBI:456216"/>
        <dbReference type="EC" id="2.7.1.148"/>
    </reaction>
</comment>
<comment type="pathway">
    <text evidence="1">Isoprenoid biosynthesis; isopentenyl diphosphate biosynthesis via DXP pathway; isopentenyl diphosphate from 1-deoxy-D-xylulose 5-phosphate: step 3/6.</text>
</comment>
<comment type="subunit">
    <text evidence="1">Homodimer.</text>
</comment>
<comment type="similarity">
    <text evidence="1">Belongs to the GHMP kinase family. IspE subfamily.</text>
</comment>